<evidence type="ECO:0000250" key="1"/>
<evidence type="ECO:0000255" key="2"/>
<evidence type="ECO:0000256" key="3">
    <source>
        <dbReference type="SAM" id="MobiDB-lite"/>
    </source>
</evidence>
<evidence type="ECO:0000305" key="4"/>
<dbReference type="EMBL" id="AACD01000088">
    <property type="protein sequence ID" value="EAA62283.1"/>
    <property type="status" value="ALT_SEQ"/>
    <property type="molecule type" value="Genomic_DNA"/>
</dbReference>
<dbReference type="EMBL" id="BN001305">
    <property type="protein sequence ID" value="CBF80864.1"/>
    <property type="molecule type" value="Genomic_DNA"/>
</dbReference>
<dbReference type="RefSeq" id="XP_662706.1">
    <property type="nucleotide sequence ID" value="XM_657614.1"/>
</dbReference>
<dbReference type="SMR" id="Q5B2X8"/>
<dbReference type="FunCoup" id="Q5B2X8">
    <property type="interactions" value="1292"/>
</dbReference>
<dbReference type="STRING" id="227321.Q5B2X8"/>
<dbReference type="EnsemblFungi" id="CBF80864">
    <property type="protein sequence ID" value="CBF80864"/>
    <property type="gene ID" value="ANIA_05102"/>
</dbReference>
<dbReference type="VEuPathDB" id="FungiDB:AN5102"/>
<dbReference type="eggNOG" id="KOG1189">
    <property type="taxonomic scope" value="Eukaryota"/>
</dbReference>
<dbReference type="HOGENOM" id="CLU_004627_1_0_1"/>
<dbReference type="InParanoid" id="Q5B2X8"/>
<dbReference type="OMA" id="YHINTIP"/>
<dbReference type="OrthoDB" id="10251642at2759"/>
<dbReference type="Proteomes" id="UP000000560">
    <property type="component" value="Chromosome V"/>
</dbReference>
<dbReference type="GO" id="GO:0035101">
    <property type="term" value="C:FACT complex"/>
    <property type="evidence" value="ECO:0000318"/>
    <property type="project" value="GO_Central"/>
</dbReference>
<dbReference type="GO" id="GO:0042393">
    <property type="term" value="F:histone binding"/>
    <property type="evidence" value="ECO:0007669"/>
    <property type="project" value="EnsemblFungi"/>
</dbReference>
<dbReference type="GO" id="GO:0140713">
    <property type="term" value="F:histone chaperone activity"/>
    <property type="evidence" value="ECO:0007669"/>
    <property type="project" value="EnsemblFungi"/>
</dbReference>
<dbReference type="GO" id="GO:0031491">
    <property type="term" value="F:nucleosome binding"/>
    <property type="evidence" value="ECO:0000318"/>
    <property type="project" value="GO_Central"/>
</dbReference>
<dbReference type="GO" id="GO:0140719">
    <property type="term" value="P:constitutive heterochromatin formation"/>
    <property type="evidence" value="ECO:0007669"/>
    <property type="project" value="EnsemblFungi"/>
</dbReference>
<dbReference type="GO" id="GO:0006281">
    <property type="term" value="P:DNA repair"/>
    <property type="evidence" value="ECO:0007669"/>
    <property type="project" value="UniProtKB-KW"/>
</dbReference>
<dbReference type="GO" id="GO:0006261">
    <property type="term" value="P:DNA-templated DNA replication"/>
    <property type="evidence" value="ECO:0007669"/>
    <property type="project" value="EnsemblFungi"/>
</dbReference>
<dbReference type="GO" id="GO:0006334">
    <property type="term" value="P:nucleosome assembly"/>
    <property type="evidence" value="ECO:0007669"/>
    <property type="project" value="EnsemblFungi"/>
</dbReference>
<dbReference type="GO" id="GO:0045899">
    <property type="term" value="P:positive regulation of RNA polymerase II transcription preinitiation complex assembly"/>
    <property type="evidence" value="ECO:0007669"/>
    <property type="project" value="EnsemblFungi"/>
</dbReference>
<dbReference type="GO" id="GO:0007063">
    <property type="term" value="P:regulation of sister chromatid cohesion"/>
    <property type="evidence" value="ECO:0007669"/>
    <property type="project" value="EnsemblFungi"/>
</dbReference>
<dbReference type="GO" id="GO:0006368">
    <property type="term" value="P:transcription elongation by RNA polymerase II"/>
    <property type="evidence" value="ECO:0000318"/>
    <property type="project" value="GO_Central"/>
</dbReference>
<dbReference type="CDD" id="cd01091">
    <property type="entry name" value="CDC68-like"/>
    <property type="match status" value="1"/>
</dbReference>
<dbReference type="FunFam" id="2.30.29.150:FF:000002">
    <property type="entry name" value="FACT complex subunit SPT16"/>
    <property type="match status" value="1"/>
</dbReference>
<dbReference type="FunFam" id="2.30.29.30:FF:000017">
    <property type="entry name" value="FACT complex subunit SPT16"/>
    <property type="match status" value="1"/>
</dbReference>
<dbReference type="FunFam" id="3.40.350.10:FF:000006">
    <property type="entry name" value="FACT complex subunit SPT16"/>
    <property type="match status" value="1"/>
</dbReference>
<dbReference type="FunFam" id="2.30.29.210:FF:000001">
    <property type="entry name" value="FACT complex subunit spt16"/>
    <property type="match status" value="1"/>
</dbReference>
<dbReference type="FunFam" id="3.90.230.10:FF:000005">
    <property type="entry name" value="FACT complex subunit spt16"/>
    <property type="match status" value="1"/>
</dbReference>
<dbReference type="Gene3D" id="2.30.29.150">
    <property type="match status" value="1"/>
</dbReference>
<dbReference type="Gene3D" id="3.90.230.10">
    <property type="entry name" value="Creatinase/methionine aminopeptidase superfamily"/>
    <property type="match status" value="1"/>
</dbReference>
<dbReference type="Gene3D" id="3.40.350.10">
    <property type="entry name" value="Creatinase/prolidase N-terminal domain"/>
    <property type="match status" value="1"/>
</dbReference>
<dbReference type="Gene3D" id="2.30.29.210">
    <property type="entry name" value="FACT complex subunit Spt16p/Cdc68p"/>
    <property type="match status" value="1"/>
</dbReference>
<dbReference type="Gene3D" id="2.30.29.30">
    <property type="entry name" value="Pleckstrin-homology domain (PH domain)/Phosphotyrosine-binding domain (PTB)"/>
    <property type="match status" value="1"/>
</dbReference>
<dbReference type="InterPro" id="IPR029149">
    <property type="entry name" value="Creatin/AminoP/Spt16_N"/>
</dbReference>
<dbReference type="InterPro" id="IPR036005">
    <property type="entry name" value="Creatinase/aminopeptidase-like"/>
</dbReference>
<dbReference type="InterPro" id="IPR029148">
    <property type="entry name" value="FACT-SPT16_Nlobe"/>
</dbReference>
<dbReference type="InterPro" id="IPR056595">
    <property type="entry name" value="Fact-SPT16_PH"/>
</dbReference>
<dbReference type="InterPro" id="IPR048969">
    <property type="entry name" value="FACT_SPT16_C"/>
</dbReference>
<dbReference type="InterPro" id="IPR013953">
    <property type="entry name" value="FACT_SPT16_M"/>
</dbReference>
<dbReference type="InterPro" id="IPR000994">
    <property type="entry name" value="Pept_M24"/>
</dbReference>
<dbReference type="InterPro" id="IPR011993">
    <property type="entry name" value="PH-like_dom_sf"/>
</dbReference>
<dbReference type="InterPro" id="IPR013719">
    <property type="entry name" value="RTT106/SPT16-like_middle_dom"/>
</dbReference>
<dbReference type="InterPro" id="IPR040258">
    <property type="entry name" value="Spt16"/>
</dbReference>
<dbReference type="InterPro" id="IPR033825">
    <property type="entry name" value="Spt16_M24"/>
</dbReference>
<dbReference type="PANTHER" id="PTHR13980">
    <property type="entry name" value="CDC68 RELATED"/>
    <property type="match status" value="1"/>
</dbReference>
<dbReference type="PANTHER" id="PTHR13980:SF15">
    <property type="entry name" value="FACT COMPLEX SUBUNIT SPT16"/>
    <property type="match status" value="1"/>
</dbReference>
<dbReference type="Pfam" id="PF14826">
    <property type="entry name" value="FACT-Spt16_Nlob"/>
    <property type="match status" value="1"/>
</dbReference>
<dbReference type="Pfam" id="PF00557">
    <property type="entry name" value="Peptidase_M24"/>
    <property type="match status" value="1"/>
</dbReference>
<dbReference type="Pfam" id="PF24824">
    <property type="entry name" value="PH_SPT16"/>
    <property type="match status" value="1"/>
</dbReference>
<dbReference type="Pfam" id="PF08512">
    <property type="entry name" value="Rttp106-like_middle"/>
    <property type="match status" value="1"/>
</dbReference>
<dbReference type="Pfam" id="PF08644">
    <property type="entry name" value="SPT16"/>
    <property type="match status" value="1"/>
</dbReference>
<dbReference type="Pfam" id="PF21091">
    <property type="entry name" value="SPT16_C"/>
    <property type="match status" value="1"/>
</dbReference>
<dbReference type="SMART" id="SM01285">
    <property type="entry name" value="FACT-Spt16_Nlob"/>
    <property type="match status" value="1"/>
</dbReference>
<dbReference type="SMART" id="SM01287">
    <property type="entry name" value="Rtt106"/>
    <property type="match status" value="1"/>
</dbReference>
<dbReference type="SMART" id="SM01286">
    <property type="entry name" value="SPT16"/>
    <property type="match status" value="1"/>
</dbReference>
<dbReference type="SUPFAM" id="SSF55920">
    <property type="entry name" value="Creatinase/aminopeptidase"/>
    <property type="match status" value="1"/>
</dbReference>
<accession>Q5B2X8</accession>
<accession>C8VEW4</accession>
<reference key="1">
    <citation type="journal article" date="2005" name="Nature">
        <title>Sequencing of Aspergillus nidulans and comparative analysis with A. fumigatus and A. oryzae.</title>
        <authorList>
            <person name="Galagan J.E."/>
            <person name="Calvo S.E."/>
            <person name="Cuomo C."/>
            <person name="Ma L.-J."/>
            <person name="Wortman J.R."/>
            <person name="Batzoglou S."/>
            <person name="Lee S.-I."/>
            <person name="Bastuerkmen M."/>
            <person name="Spevak C.C."/>
            <person name="Clutterbuck J."/>
            <person name="Kapitonov V."/>
            <person name="Jurka J."/>
            <person name="Scazzocchio C."/>
            <person name="Farman M.L."/>
            <person name="Butler J."/>
            <person name="Purcell S."/>
            <person name="Harris S."/>
            <person name="Braus G.H."/>
            <person name="Draht O."/>
            <person name="Busch S."/>
            <person name="D'Enfert C."/>
            <person name="Bouchier C."/>
            <person name="Goldman G.H."/>
            <person name="Bell-Pedersen D."/>
            <person name="Griffiths-Jones S."/>
            <person name="Doonan J.H."/>
            <person name="Yu J."/>
            <person name="Vienken K."/>
            <person name="Pain A."/>
            <person name="Freitag M."/>
            <person name="Selker E.U."/>
            <person name="Archer D.B."/>
            <person name="Penalva M.A."/>
            <person name="Oakley B.R."/>
            <person name="Momany M."/>
            <person name="Tanaka T."/>
            <person name="Kumagai T."/>
            <person name="Asai K."/>
            <person name="Machida M."/>
            <person name="Nierman W.C."/>
            <person name="Denning D.W."/>
            <person name="Caddick M.X."/>
            <person name="Hynes M."/>
            <person name="Paoletti M."/>
            <person name="Fischer R."/>
            <person name="Miller B.L."/>
            <person name="Dyer P.S."/>
            <person name="Sachs M.S."/>
            <person name="Osmani S.A."/>
            <person name="Birren B.W."/>
        </authorList>
    </citation>
    <scope>NUCLEOTIDE SEQUENCE [LARGE SCALE GENOMIC DNA]</scope>
    <source>
        <strain>FGSC A4 / ATCC 38163 / CBS 112.46 / NRRL 194 / M139</strain>
    </source>
</reference>
<reference key="2">
    <citation type="journal article" date="2009" name="Fungal Genet. Biol.">
        <title>The 2008 update of the Aspergillus nidulans genome annotation: a community effort.</title>
        <authorList>
            <person name="Wortman J.R."/>
            <person name="Gilsenan J.M."/>
            <person name="Joardar V."/>
            <person name="Deegan J."/>
            <person name="Clutterbuck J."/>
            <person name="Andersen M.R."/>
            <person name="Archer D."/>
            <person name="Bencina M."/>
            <person name="Braus G."/>
            <person name="Coutinho P."/>
            <person name="von Dohren H."/>
            <person name="Doonan J."/>
            <person name="Driessen A.J."/>
            <person name="Durek P."/>
            <person name="Espeso E."/>
            <person name="Fekete E."/>
            <person name="Flipphi M."/>
            <person name="Estrada C.G."/>
            <person name="Geysens S."/>
            <person name="Goldman G."/>
            <person name="de Groot P.W."/>
            <person name="Hansen K."/>
            <person name="Harris S.D."/>
            <person name="Heinekamp T."/>
            <person name="Helmstaedt K."/>
            <person name="Henrissat B."/>
            <person name="Hofmann G."/>
            <person name="Homan T."/>
            <person name="Horio T."/>
            <person name="Horiuchi H."/>
            <person name="James S."/>
            <person name="Jones M."/>
            <person name="Karaffa L."/>
            <person name="Karanyi Z."/>
            <person name="Kato M."/>
            <person name="Keller N."/>
            <person name="Kelly D.E."/>
            <person name="Kiel J.A."/>
            <person name="Kim J.M."/>
            <person name="van der Klei I.J."/>
            <person name="Klis F.M."/>
            <person name="Kovalchuk A."/>
            <person name="Krasevec N."/>
            <person name="Kubicek C.P."/>
            <person name="Liu B."/>
            <person name="Maccabe A."/>
            <person name="Meyer V."/>
            <person name="Mirabito P."/>
            <person name="Miskei M."/>
            <person name="Mos M."/>
            <person name="Mullins J."/>
            <person name="Nelson D.R."/>
            <person name="Nielsen J."/>
            <person name="Oakley B.R."/>
            <person name="Osmani S.A."/>
            <person name="Pakula T."/>
            <person name="Paszewski A."/>
            <person name="Paulsen I."/>
            <person name="Pilsyk S."/>
            <person name="Pocsi I."/>
            <person name="Punt P.J."/>
            <person name="Ram A.F."/>
            <person name="Ren Q."/>
            <person name="Robellet X."/>
            <person name="Robson G."/>
            <person name="Seiboth B."/>
            <person name="van Solingen P."/>
            <person name="Specht T."/>
            <person name="Sun J."/>
            <person name="Taheri-Talesh N."/>
            <person name="Takeshita N."/>
            <person name="Ussery D."/>
            <person name="vanKuyk P.A."/>
            <person name="Visser H."/>
            <person name="van de Vondervoort P.J."/>
            <person name="de Vries R.P."/>
            <person name="Walton J."/>
            <person name="Xiang X."/>
            <person name="Xiong Y."/>
            <person name="Zeng A.P."/>
            <person name="Brandt B.W."/>
            <person name="Cornell M.J."/>
            <person name="van den Hondel C.A."/>
            <person name="Visser J."/>
            <person name="Oliver S.G."/>
            <person name="Turner G."/>
        </authorList>
    </citation>
    <scope>GENOME REANNOTATION</scope>
    <source>
        <strain>FGSC A4 / ATCC 38163 / CBS 112.46 / NRRL 194 / M139</strain>
    </source>
</reference>
<protein>
    <recommendedName>
        <fullName>FACT complex subunit spt16</fullName>
    </recommendedName>
    <alternativeName>
        <fullName>Facilitates chromatin transcription complex subunit spt16</fullName>
    </alternativeName>
</protein>
<name>SPT16_EMENI</name>
<gene>
    <name type="primary">spt16</name>
    <name type="ORF">AN5102</name>
</gene>
<proteinExistence type="inferred from homology"/>
<keyword id="KW-0158">Chromosome</keyword>
<keyword id="KW-0175">Coiled coil</keyword>
<keyword id="KW-0227">DNA damage</keyword>
<keyword id="KW-0234">DNA repair</keyword>
<keyword id="KW-0235">DNA replication</keyword>
<keyword id="KW-0539">Nucleus</keyword>
<keyword id="KW-1185">Reference proteome</keyword>
<keyword id="KW-0804">Transcription</keyword>
<keyword id="KW-0805">Transcription regulation</keyword>
<organism>
    <name type="scientific">Emericella nidulans (strain FGSC A4 / ATCC 38163 / CBS 112.46 / NRRL 194 / M139)</name>
    <name type="common">Aspergillus nidulans</name>
    <dbReference type="NCBI Taxonomy" id="227321"/>
    <lineage>
        <taxon>Eukaryota</taxon>
        <taxon>Fungi</taxon>
        <taxon>Dikarya</taxon>
        <taxon>Ascomycota</taxon>
        <taxon>Pezizomycotina</taxon>
        <taxon>Eurotiomycetes</taxon>
        <taxon>Eurotiomycetidae</taxon>
        <taxon>Eurotiales</taxon>
        <taxon>Aspergillaceae</taxon>
        <taxon>Aspergillus</taxon>
        <taxon>Aspergillus subgen. Nidulantes</taxon>
    </lineage>
</organism>
<comment type="function">
    <text evidence="1">Component of the FACT complex, a general chromatin factor that acts to reorganize nucleosomes. The FACT complex is involved in multiple processes that require DNA as a template such as mRNA elongation, DNA replication and DNA repair. During transcription elongation the FACT complex acts as a histone chaperone that both destabilizes and restores nucleosomal structure. It facilitates the passage of RNA polymerase II and transcription by promoting the dissociation of one histone H2A-H2B dimer from the nucleosome, then subsequently promotes the reestablishment of the nucleosome following the passage of RNA polymerase II (By similarity).</text>
</comment>
<comment type="subunit">
    <text evidence="1">Forms a stable heterodimer with pob3. The spt16-pob3 dimer weakly associates with multiple molecules of nhp6 to form the FACT complex (By similarity).</text>
</comment>
<comment type="subcellular location">
    <subcellularLocation>
        <location evidence="1">Nucleus</location>
    </subcellularLocation>
    <subcellularLocation>
        <location evidence="1">Chromosome</location>
    </subcellularLocation>
</comment>
<comment type="similarity">
    <text evidence="4">Belongs to the peptidase M24 family. SPT16 subfamily.</text>
</comment>
<comment type="caution">
    <text evidence="4">Although related to the peptidase M24 family, this protein lacks conserved active site residues suggesting that it may lack peptidase activity.</text>
</comment>
<comment type="sequence caution" evidence="4">
    <conflict type="erroneous gene model prediction">
        <sequence resource="EMBL-CDS" id="EAA62283"/>
    </conflict>
</comment>
<feature type="chain" id="PRO_0000245185" description="FACT complex subunit spt16">
    <location>
        <begin position="1"/>
        <end position="1019"/>
    </location>
</feature>
<feature type="region of interest" description="Disordered" evidence="3">
    <location>
        <begin position="443"/>
        <end position="498"/>
    </location>
</feature>
<feature type="region of interest" description="Disordered" evidence="3">
    <location>
        <begin position="755"/>
        <end position="774"/>
    </location>
</feature>
<feature type="region of interest" description="Disordered" evidence="3">
    <location>
        <begin position="936"/>
        <end position="1019"/>
    </location>
</feature>
<feature type="coiled-coil region" evidence="2">
    <location>
        <begin position="477"/>
        <end position="501"/>
    </location>
</feature>
<feature type="coiled-coil region" evidence="2">
    <location>
        <begin position="625"/>
        <end position="651"/>
    </location>
</feature>
<feature type="coiled-coil region" evidence="2">
    <location>
        <begin position="775"/>
        <end position="798"/>
    </location>
</feature>
<feature type="compositionally biased region" description="Basic and acidic residues" evidence="3">
    <location>
        <begin position="446"/>
        <end position="457"/>
    </location>
</feature>
<feature type="compositionally biased region" description="Polar residues" evidence="3">
    <location>
        <begin position="458"/>
        <end position="468"/>
    </location>
</feature>
<feature type="compositionally biased region" description="Basic and acidic residues" evidence="3">
    <location>
        <begin position="483"/>
        <end position="498"/>
    </location>
</feature>
<feature type="compositionally biased region" description="Acidic residues" evidence="3">
    <location>
        <begin position="938"/>
        <end position="994"/>
    </location>
</feature>
<feature type="compositionally biased region" description="Basic and acidic residues" evidence="3">
    <location>
        <begin position="995"/>
        <end position="1007"/>
    </location>
</feature>
<sequence>MGDEIVIDKTAFFNRLSSFYAAWKADKRSTNSVFGGAGSIIILMGKTDEANSYQKNNAIHFWLLGYEFPATLFVFTPEVMYVVTTAKKAKHLEPLKGGKIPVEILVTTKDQEEKTRLFEKCVDIIKSAGNKVGILPRDTTTGPFVEDWKRVYGKISGDVEEVDISPALSAACFSVKDTDELVSIRNASRACSGLMSDYFVDEMSRLLDEEKQMTHKALSMRIDAKIDDAKFFNKLAKLPSEFDPQQIDWAYGPVIQSGGKYDLKLTAVSDDNNLEPGIIIAGFGIRYKTYSSIIGRTYLVDPTKSQEANYSLLLSVHEAVLKEARDGVVAKELYNKAIGIVRARKPELESHFVKNVGAGIGIELRDSNMILNGKNTRVLKSGMTFSITVGLVDVEEPSVKDKKKNVYSMMITDTVRVGEQGPHVFTKDAGIDMDSVSFYFGDEEEPQKPAKEKKETKSSAIASRNVTRTKLRAERPTQVNEGAEARRREHQKELAAKKTKEGLDRFAGTTGDDNGVTQKKFKRFESYKRDNQLPAKVKDLTVYVDHKASTVIVPVMGRPVPFHINTIKNASKSDEGEYAYLRINFLSPGQGVGRKDDQPFEDLSAHFLRNLTLRSKDNDRFAQVAQDITELRKNALRREQEKKEMEDVVEQDKLVEIRNRRPVKLPDVYLRPPLDGKRVPGEVEIHQNGLRYVSPFRNEHVDVLFSNVKHLFFQPCAHELIVLIHVHLKTPIMIGKRKTRDIQFYREATEMQFDETGNRRRKHRYGDEEEFEAEQEERRRRAALDREFKAFAEKIADAGKDEGVDVDIPFREIGFTGVPNRSNVLIQPTTDALVQLTEPPFLVISLNEIEIAHLERVQFGLKNFDLVFVFKDFHRAPVHINTIPVENLEGVKDWLDSVDIAYTEGPLNLNWTTIMKTVVSDPYGFFADGGWSFLAAESDSEDGSDEEEESAFELSESELAADESSEEDSDYDDDASADDDFSADEDESGEDWDELEHQAKKKDRESGLDDEDRGKKRKR</sequence>